<sequence>MTKKKAHKPGSATIALNKRARHEYFIEEEFEAGLALQGWEVKSLRAGKANISDSYVLLRDGEAFLFGANITPMAVASTHVVCDPTRTRKLLLNQRELDSLYGRVNREGYTVVALSLYWKNAWCKVKIGVAKGKKQHDKRSDIKEREWQVDKARIMKNAHR</sequence>
<organism>
    <name type="scientific">Escherichia coli (strain SE11)</name>
    <dbReference type="NCBI Taxonomy" id="409438"/>
    <lineage>
        <taxon>Bacteria</taxon>
        <taxon>Pseudomonadati</taxon>
        <taxon>Pseudomonadota</taxon>
        <taxon>Gammaproteobacteria</taxon>
        <taxon>Enterobacterales</taxon>
        <taxon>Enterobacteriaceae</taxon>
        <taxon>Escherichia</taxon>
    </lineage>
</organism>
<keyword id="KW-0963">Cytoplasm</keyword>
<keyword id="KW-0694">RNA-binding</keyword>
<gene>
    <name evidence="1" type="primary">smpB</name>
    <name type="ordered locus">ECSE_2903</name>
</gene>
<evidence type="ECO:0000255" key="1">
    <source>
        <dbReference type="HAMAP-Rule" id="MF_00023"/>
    </source>
</evidence>
<feature type="chain" id="PRO_1000090149" description="SsrA-binding protein">
    <location>
        <begin position="1"/>
        <end position="160"/>
    </location>
</feature>
<dbReference type="EMBL" id="AP009240">
    <property type="protein sequence ID" value="BAG78427.1"/>
    <property type="molecule type" value="Genomic_DNA"/>
</dbReference>
<dbReference type="RefSeq" id="WP_000162574.1">
    <property type="nucleotide sequence ID" value="NC_011415.1"/>
</dbReference>
<dbReference type="SMR" id="B6I641"/>
<dbReference type="GeneID" id="93774470"/>
<dbReference type="KEGG" id="ecy:ECSE_2903"/>
<dbReference type="HOGENOM" id="CLU_108953_3_0_6"/>
<dbReference type="Proteomes" id="UP000008199">
    <property type="component" value="Chromosome"/>
</dbReference>
<dbReference type="GO" id="GO:0005829">
    <property type="term" value="C:cytosol"/>
    <property type="evidence" value="ECO:0007669"/>
    <property type="project" value="TreeGrafter"/>
</dbReference>
<dbReference type="GO" id="GO:0003723">
    <property type="term" value="F:RNA binding"/>
    <property type="evidence" value="ECO:0007669"/>
    <property type="project" value="UniProtKB-UniRule"/>
</dbReference>
<dbReference type="GO" id="GO:0070929">
    <property type="term" value="P:trans-translation"/>
    <property type="evidence" value="ECO:0007669"/>
    <property type="project" value="UniProtKB-UniRule"/>
</dbReference>
<dbReference type="CDD" id="cd09294">
    <property type="entry name" value="SmpB"/>
    <property type="match status" value="1"/>
</dbReference>
<dbReference type="FunFam" id="2.40.280.10:FF:000001">
    <property type="entry name" value="SsrA-binding protein"/>
    <property type="match status" value="1"/>
</dbReference>
<dbReference type="Gene3D" id="2.40.280.10">
    <property type="match status" value="1"/>
</dbReference>
<dbReference type="HAMAP" id="MF_00023">
    <property type="entry name" value="SmpB"/>
    <property type="match status" value="1"/>
</dbReference>
<dbReference type="InterPro" id="IPR023620">
    <property type="entry name" value="SmpB"/>
</dbReference>
<dbReference type="InterPro" id="IPR000037">
    <property type="entry name" value="SsrA-bd_prot"/>
</dbReference>
<dbReference type="InterPro" id="IPR020081">
    <property type="entry name" value="SsrA-bd_prot_CS"/>
</dbReference>
<dbReference type="NCBIfam" id="NF003843">
    <property type="entry name" value="PRK05422.1"/>
    <property type="match status" value="1"/>
</dbReference>
<dbReference type="NCBIfam" id="TIGR00086">
    <property type="entry name" value="smpB"/>
    <property type="match status" value="1"/>
</dbReference>
<dbReference type="PANTHER" id="PTHR30308:SF2">
    <property type="entry name" value="SSRA-BINDING PROTEIN"/>
    <property type="match status" value="1"/>
</dbReference>
<dbReference type="PANTHER" id="PTHR30308">
    <property type="entry name" value="TMRNA-BINDING COMPONENT OF TRANS-TRANSLATION TAGGING COMPLEX"/>
    <property type="match status" value="1"/>
</dbReference>
<dbReference type="Pfam" id="PF01668">
    <property type="entry name" value="SmpB"/>
    <property type="match status" value="1"/>
</dbReference>
<dbReference type="SUPFAM" id="SSF74982">
    <property type="entry name" value="Small protein B (SmpB)"/>
    <property type="match status" value="1"/>
</dbReference>
<dbReference type="PROSITE" id="PS01317">
    <property type="entry name" value="SSRP"/>
    <property type="match status" value="1"/>
</dbReference>
<reference key="1">
    <citation type="journal article" date="2008" name="DNA Res.">
        <title>Complete genome sequence and comparative analysis of the wild-type commensal Escherichia coli strain SE11 isolated from a healthy adult.</title>
        <authorList>
            <person name="Oshima K."/>
            <person name="Toh H."/>
            <person name="Ogura Y."/>
            <person name="Sasamoto H."/>
            <person name="Morita H."/>
            <person name="Park S.-H."/>
            <person name="Ooka T."/>
            <person name="Iyoda S."/>
            <person name="Taylor T.D."/>
            <person name="Hayashi T."/>
            <person name="Itoh K."/>
            <person name="Hattori M."/>
        </authorList>
    </citation>
    <scope>NUCLEOTIDE SEQUENCE [LARGE SCALE GENOMIC DNA]</scope>
    <source>
        <strain>SE11</strain>
    </source>
</reference>
<accession>B6I641</accession>
<proteinExistence type="inferred from homology"/>
<name>SSRP_ECOSE</name>
<comment type="function">
    <text evidence="1">Required for rescue of stalled ribosomes mediated by trans-translation. Binds to transfer-messenger RNA (tmRNA), required for stable association of tmRNA with ribosomes. tmRNA and SmpB together mimic tRNA shape, replacing the anticodon stem-loop with SmpB. tmRNA is encoded by the ssrA gene; the 2 termini fold to resemble tRNA(Ala) and it encodes a 'tag peptide', a short internal open reading frame. During trans-translation Ala-aminoacylated tmRNA acts like a tRNA, entering the A-site of stalled ribosomes, displacing the stalled mRNA. The ribosome then switches to translate the ORF on the tmRNA; the nascent peptide is terminated with the 'tag peptide' encoded by the tmRNA and targeted for degradation. The ribosome is freed to recommence translation, which seems to be the essential function of trans-translation.</text>
</comment>
<comment type="subcellular location">
    <subcellularLocation>
        <location evidence="1">Cytoplasm</location>
    </subcellularLocation>
    <text evidence="1">The tmRNA-SmpB complex associates with stalled 70S ribosomes.</text>
</comment>
<comment type="similarity">
    <text evidence="1">Belongs to the SmpB family.</text>
</comment>
<protein>
    <recommendedName>
        <fullName evidence="1">SsrA-binding protein</fullName>
    </recommendedName>
    <alternativeName>
        <fullName evidence="1">Small protein B</fullName>
    </alternativeName>
</protein>